<reference key="1">
    <citation type="journal article" date="2006" name="Nature">
        <title>Mitoferrin is essential for erythroid iron assimilation.</title>
        <authorList>
            <person name="Shaw G.C."/>
            <person name="Cope J.J."/>
            <person name="Li L."/>
            <person name="Corson K."/>
            <person name="Hersey C."/>
            <person name="Ackermann G.E."/>
            <person name="Gwynn B."/>
            <person name="Lambert A.J."/>
            <person name="Wingert R.A."/>
            <person name="Traver D."/>
            <person name="Trede N.S."/>
            <person name="Barut B.A."/>
            <person name="Zhou Y."/>
            <person name="Minet E."/>
            <person name="Donovan A."/>
            <person name="Brownlie A."/>
            <person name="Balzan R."/>
            <person name="Weiss M.J."/>
            <person name="Peters L.L."/>
            <person name="Kaplan J."/>
            <person name="Zon L.I."/>
            <person name="Paw B.H."/>
        </authorList>
    </citation>
    <scope>NUCLEOTIDE SEQUENCE [MRNA]</scope>
    <scope>FUNCTION</scope>
    <scope>SUBCELLULAR LOCATION</scope>
    <scope>TISSUE SPECIFICITY</scope>
    <scope>MUTAGENESIS OF LEU-46; MET-61; LEU-144; ARG-158 AND TYR-207</scope>
    <scope>TRANSPORTER ACTIVITY</scope>
    <scope>DISRUPTION PHENOTYPE</scope>
</reference>
<dbReference type="EMBL" id="DQ112224">
    <property type="protein sequence ID" value="ABA33608.1"/>
    <property type="molecule type" value="mRNA"/>
</dbReference>
<dbReference type="EMBL" id="DQ112225">
    <property type="protein sequence ID" value="ABA33609.1"/>
    <property type="molecule type" value="mRNA"/>
</dbReference>
<dbReference type="RefSeq" id="NP_001035060.1">
    <property type="nucleotide sequence ID" value="NM_001039971.2"/>
</dbReference>
<dbReference type="SMR" id="Q287T7"/>
<dbReference type="FunCoup" id="Q287T7">
    <property type="interactions" value="2351"/>
</dbReference>
<dbReference type="STRING" id="7955.ENSDARP00000090636"/>
<dbReference type="TCDB" id="2.A.29.5.3">
    <property type="family name" value="the mitochondrial carrier (mc) family"/>
</dbReference>
<dbReference type="PaxDb" id="7955-ENSDARP00000090636"/>
<dbReference type="Ensembl" id="ENSDART00000099863">
    <property type="protein sequence ID" value="ENSDARP00000090636"/>
    <property type="gene ID" value="ENSDARG00000073743"/>
</dbReference>
<dbReference type="GeneID" id="387000"/>
<dbReference type="KEGG" id="dre:387000"/>
<dbReference type="AGR" id="ZFIN:ZDB-GENE-031118-202"/>
<dbReference type="CTD" id="51312"/>
<dbReference type="ZFIN" id="ZDB-GENE-031118-202">
    <property type="gene designation" value="slc25a37"/>
</dbReference>
<dbReference type="eggNOG" id="KOG0760">
    <property type="taxonomic scope" value="Eukaryota"/>
</dbReference>
<dbReference type="HOGENOM" id="CLU_015166_3_1_1"/>
<dbReference type="InParanoid" id="Q287T7"/>
<dbReference type="OMA" id="MYNSQHQ"/>
<dbReference type="OrthoDB" id="43906at2759"/>
<dbReference type="PhylomeDB" id="Q287T7"/>
<dbReference type="TreeFam" id="TF314118"/>
<dbReference type="PRO" id="PR:Q287T7"/>
<dbReference type="Proteomes" id="UP000000437">
    <property type="component" value="Chromosome 8"/>
</dbReference>
<dbReference type="Bgee" id="ENSDARG00000073743">
    <property type="expression patterns" value="Expressed in mature ovarian follicle and 19 other cell types or tissues"/>
</dbReference>
<dbReference type="ExpressionAtlas" id="Q287T7">
    <property type="expression patterns" value="baseline"/>
</dbReference>
<dbReference type="GO" id="GO:0005743">
    <property type="term" value="C:mitochondrial inner membrane"/>
    <property type="evidence" value="ECO:0007669"/>
    <property type="project" value="UniProtKB-SubCell"/>
</dbReference>
<dbReference type="GO" id="GO:0031966">
    <property type="term" value="C:mitochondrial membrane"/>
    <property type="evidence" value="ECO:0000318"/>
    <property type="project" value="GO_Central"/>
</dbReference>
<dbReference type="GO" id="GO:0005739">
    <property type="term" value="C:mitochondrion"/>
    <property type="evidence" value="ECO:0000314"/>
    <property type="project" value="ZFIN"/>
</dbReference>
<dbReference type="GO" id="GO:0015093">
    <property type="term" value="F:ferrous iron transmembrane transporter activity"/>
    <property type="evidence" value="ECO:0000318"/>
    <property type="project" value="GO_Central"/>
</dbReference>
<dbReference type="GO" id="GO:0005381">
    <property type="term" value="F:iron ion transmembrane transporter activity"/>
    <property type="evidence" value="ECO:0000315"/>
    <property type="project" value="ZFIN"/>
</dbReference>
<dbReference type="GO" id="GO:0035162">
    <property type="term" value="P:embryonic hemopoiesis"/>
    <property type="evidence" value="ECO:0000315"/>
    <property type="project" value="ZFIN"/>
</dbReference>
<dbReference type="GO" id="GO:0048821">
    <property type="term" value="P:erythrocyte development"/>
    <property type="evidence" value="ECO:0000315"/>
    <property type="project" value="ZFIN"/>
</dbReference>
<dbReference type="GO" id="GO:0043249">
    <property type="term" value="P:erythrocyte maturation"/>
    <property type="evidence" value="ECO:0000315"/>
    <property type="project" value="ZFIN"/>
</dbReference>
<dbReference type="GO" id="GO:0048250">
    <property type="term" value="P:iron import into the mitochondrion"/>
    <property type="evidence" value="ECO:0000315"/>
    <property type="project" value="ZFIN"/>
</dbReference>
<dbReference type="FunFam" id="1.50.40.10:FF:000027">
    <property type="entry name" value="mitoferrin-2 isoform X1"/>
    <property type="match status" value="1"/>
</dbReference>
<dbReference type="FunFam" id="1.50.40.10:FF:000031">
    <property type="entry name" value="mitoferrin-2 isoform X1"/>
    <property type="match status" value="1"/>
</dbReference>
<dbReference type="Gene3D" id="1.50.40.10">
    <property type="entry name" value="Mitochondrial carrier domain"/>
    <property type="match status" value="2"/>
</dbReference>
<dbReference type="InterPro" id="IPR002067">
    <property type="entry name" value="Mit_carrier"/>
</dbReference>
<dbReference type="InterPro" id="IPR018108">
    <property type="entry name" value="Mitochondrial_sb/sol_carrier"/>
</dbReference>
<dbReference type="InterPro" id="IPR023395">
    <property type="entry name" value="Mt_carrier_dom_sf"/>
</dbReference>
<dbReference type="PANTHER" id="PTHR45758:SF4">
    <property type="entry name" value="MITOFERRIN-1"/>
    <property type="match status" value="1"/>
</dbReference>
<dbReference type="PANTHER" id="PTHR45758">
    <property type="entry name" value="MITOFERRIN-1-RELATED"/>
    <property type="match status" value="1"/>
</dbReference>
<dbReference type="Pfam" id="PF00153">
    <property type="entry name" value="Mito_carr"/>
    <property type="match status" value="3"/>
</dbReference>
<dbReference type="PRINTS" id="PR00926">
    <property type="entry name" value="MITOCARRIER"/>
</dbReference>
<dbReference type="SUPFAM" id="SSF103506">
    <property type="entry name" value="Mitochondrial carrier"/>
    <property type="match status" value="1"/>
</dbReference>
<dbReference type="PROSITE" id="PS50920">
    <property type="entry name" value="SOLCAR"/>
    <property type="match status" value="3"/>
</dbReference>
<sequence length="332" mass="36711">MELRTDAVLASLEMSEPVKNDEDYESLPAHASLGTHMTAGAVAGILEHTVMYPVDSVKTRMQSLQPDPKAQYRSVYGALKRIVRTEGLLRPLRGLNITVLGAGPAHALYFACYERIKRSLSDVIQNGGNSHIANGVAGSVATVLHDAVMNPAEVVKQRMQMYNSPYRSLYDCVLMVSRKEGLAAFYRSYSTQLTMNIPFQAVHFITYEFMQEHFNPHRQYRPETHIISGAAAGAVSAAVTTPLDVCKTLLNTQENVALSSAHVSGHLSGMVNALRTVYRLGGVPAFFKGIQARVIYQMPSTAIAWSVYEFFKYFLTQHESHVQEVSHKTSPT</sequence>
<feature type="chain" id="PRO_0000235254" description="Mitoferrin-1">
    <location>
        <begin position="1"/>
        <end position="332"/>
    </location>
</feature>
<feature type="transmembrane region" description="Helical; Name=1" evidence="1">
    <location>
        <begin position="33"/>
        <end position="52"/>
    </location>
</feature>
<feature type="transmembrane region" description="Helical; Name=2" evidence="1">
    <location>
        <begin position="94"/>
        <end position="113"/>
    </location>
</feature>
<feature type="transmembrane region" description="Helical; Name=3" evidence="1">
    <location>
        <begin position="131"/>
        <end position="150"/>
    </location>
</feature>
<feature type="transmembrane region" description="Helical; Name=4" evidence="1">
    <location>
        <begin position="188"/>
        <end position="207"/>
    </location>
</feature>
<feature type="transmembrane region" description="Helical; Name=5" evidence="1">
    <location>
        <begin position="222"/>
        <end position="241"/>
    </location>
</feature>
<feature type="transmembrane region" description="Helical; Name=6" evidence="1">
    <location>
        <begin position="289"/>
        <end position="308"/>
    </location>
</feature>
<feature type="repeat" description="Solcar 1">
    <location>
        <begin position="31"/>
        <end position="119"/>
    </location>
</feature>
<feature type="repeat" description="Solcar 2">
    <location>
        <begin position="129"/>
        <end position="213"/>
    </location>
</feature>
<feature type="repeat" description="Solcar 3">
    <location>
        <begin position="220"/>
        <end position="314"/>
    </location>
</feature>
<feature type="mutagenesis site" description="In frs-tq223; induces embryonic hypochronic anemia." evidence="2">
    <original>L</original>
    <variation>R</variation>
    <location>
        <position position="46"/>
    </location>
</feature>
<feature type="mutagenesis site" description="In frs-tm130; induces embryonic hypochronic anemia." evidence="2">
    <original>M</original>
    <variation>K</variation>
    <location>
        <position position="61"/>
    </location>
</feature>
<feature type="mutagenesis site" description="In frs-ij001; induces embryonic hypochronic anemia." evidence="2">
    <original>L</original>
    <variation>H</variation>
    <location>
        <position position="144"/>
    </location>
</feature>
<feature type="mutagenesis site" description="In frs-tg180; induces embryonic hypochronic anemia." evidence="2">
    <original>R</original>
    <variation>W</variation>
    <location>
        <position position="158"/>
    </location>
</feature>
<feature type="mutagenesis site" description="In frs-tg221; induces embryonic hypochronic anemia." evidence="2">
    <original>Y</original>
    <variation>D</variation>
    <location>
        <position position="207"/>
    </location>
</feature>
<protein>
    <recommendedName>
        <fullName>Mitoferrin-1</fullName>
    </recommendedName>
    <alternativeName>
        <fullName>Mitochondrial iron transporter 1</fullName>
    </alternativeName>
    <alternativeName>
        <fullName>Protein frascati</fullName>
    </alternativeName>
    <alternativeName>
        <fullName>Solute carrier family 25 member 37</fullName>
    </alternativeName>
</protein>
<gene>
    <name type="primary">slc25a37</name>
    <name type="synonym">frs</name>
    <name type="synonym">mfrn</name>
</gene>
<evidence type="ECO:0000255" key="1"/>
<evidence type="ECO:0000269" key="2">
    <source>
    </source>
</evidence>
<evidence type="ECO:0000305" key="3"/>
<evidence type="ECO:0000305" key="4">
    <source>
    </source>
</evidence>
<comment type="function">
    <text evidence="2">Mitochondrial iron transporter that specifically mediates iron uptake in developing erythroid cells, thereby playing an essential role in heme biosynthesis.</text>
</comment>
<comment type="catalytic activity">
    <reaction evidence="2">
        <text>Fe(2+)(in) = Fe(2+)(out)</text>
        <dbReference type="Rhea" id="RHEA:28486"/>
        <dbReference type="ChEBI" id="CHEBI:29033"/>
    </reaction>
</comment>
<comment type="subcellular location">
    <subcellularLocation>
        <location evidence="4">Mitochondrion inner membrane</location>
        <topology evidence="1">Multi-pass membrane protein</topology>
    </subcellularLocation>
</comment>
<comment type="tissue specificity">
    <text evidence="2">Highly expressed in hematopoietic organs, Expressed in the intermediate cell mass (ICM), a tissue equivalent to the mammalian extraembryonic yolk-sac blood islands. Colocalizes with gata1.</text>
</comment>
<comment type="disruption phenotype">
    <text evidence="2">Morpholino knockdown results in embryos which are profoundly anemic.</text>
</comment>
<comment type="similarity">
    <text evidence="3">Belongs to the mitochondrial carrier (TC 2.A.29) family.</text>
</comment>
<proteinExistence type="evidence at protein level"/>
<keyword id="KW-0406">Ion transport</keyword>
<keyword id="KW-0408">Iron</keyword>
<keyword id="KW-0410">Iron transport</keyword>
<keyword id="KW-0472">Membrane</keyword>
<keyword id="KW-0496">Mitochondrion</keyword>
<keyword id="KW-0999">Mitochondrion inner membrane</keyword>
<keyword id="KW-1185">Reference proteome</keyword>
<keyword id="KW-0677">Repeat</keyword>
<keyword id="KW-0812">Transmembrane</keyword>
<keyword id="KW-1133">Transmembrane helix</keyword>
<keyword id="KW-0813">Transport</keyword>
<name>MFRN1_DANRE</name>
<accession>Q287T7</accession>
<organism>
    <name type="scientific">Danio rerio</name>
    <name type="common">Zebrafish</name>
    <name type="synonym">Brachydanio rerio</name>
    <dbReference type="NCBI Taxonomy" id="7955"/>
    <lineage>
        <taxon>Eukaryota</taxon>
        <taxon>Metazoa</taxon>
        <taxon>Chordata</taxon>
        <taxon>Craniata</taxon>
        <taxon>Vertebrata</taxon>
        <taxon>Euteleostomi</taxon>
        <taxon>Actinopterygii</taxon>
        <taxon>Neopterygii</taxon>
        <taxon>Teleostei</taxon>
        <taxon>Ostariophysi</taxon>
        <taxon>Cypriniformes</taxon>
        <taxon>Danionidae</taxon>
        <taxon>Danioninae</taxon>
        <taxon>Danio</taxon>
    </lineage>
</organism>